<evidence type="ECO:0000255" key="1">
    <source>
        <dbReference type="HAMAP-Rule" id="MF_01865"/>
    </source>
</evidence>
<evidence type="ECO:0000255" key="2">
    <source>
        <dbReference type="PROSITE-ProRule" id="PRU01266"/>
    </source>
</evidence>
<evidence type="ECO:0000256" key="3">
    <source>
        <dbReference type="SAM" id="MobiDB-lite"/>
    </source>
</evidence>
<organism>
    <name type="scientific">Streptomyces coelicolor (strain ATCC BAA-471 / A3(2) / M145)</name>
    <dbReference type="NCBI Taxonomy" id="100226"/>
    <lineage>
        <taxon>Bacteria</taxon>
        <taxon>Bacillati</taxon>
        <taxon>Actinomycetota</taxon>
        <taxon>Actinomycetes</taxon>
        <taxon>Kitasatosporales</taxon>
        <taxon>Streptomycetaceae</taxon>
        <taxon>Streptomyces</taxon>
        <taxon>Streptomyces albidoflavus group</taxon>
    </lineage>
</organism>
<reference key="1">
    <citation type="journal article" date="2002" name="Nature">
        <title>Complete genome sequence of the model actinomycete Streptomyces coelicolor A3(2).</title>
        <authorList>
            <person name="Bentley S.D."/>
            <person name="Chater K.F."/>
            <person name="Cerdeno-Tarraga A.-M."/>
            <person name="Challis G.L."/>
            <person name="Thomson N.R."/>
            <person name="James K.D."/>
            <person name="Harris D.E."/>
            <person name="Quail M.A."/>
            <person name="Kieser H."/>
            <person name="Harper D."/>
            <person name="Bateman A."/>
            <person name="Brown S."/>
            <person name="Chandra G."/>
            <person name="Chen C.W."/>
            <person name="Collins M."/>
            <person name="Cronin A."/>
            <person name="Fraser A."/>
            <person name="Goble A."/>
            <person name="Hidalgo J."/>
            <person name="Hornsby T."/>
            <person name="Howarth S."/>
            <person name="Huang C.-H."/>
            <person name="Kieser T."/>
            <person name="Larke L."/>
            <person name="Murphy L.D."/>
            <person name="Oliver K."/>
            <person name="O'Neil S."/>
            <person name="Rabbinowitsch E."/>
            <person name="Rajandream M.A."/>
            <person name="Rutherford K.M."/>
            <person name="Rutter S."/>
            <person name="Seeger K."/>
            <person name="Saunders D."/>
            <person name="Sharp S."/>
            <person name="Squares R."/>
            <person name="Squares S."/>
            <person name="Taylor K."/>
            <person name="Warren T."/>
            <person name="Wietzorrek A."/>
            <person name="Woodward J.R."/>
            <person name="Barrell B.G."/>
            <person name="Parkhill J."/>
            <person name="Hopwood D.A."/>
        </authorList>
    </citation>
    <scope>NUCLEOTIDE SEQUENCE [LARGE SCALE GENOMIC DNA]</scope>
    <source>
        <strain>ATCC BAA-471 / A3(2) / M145</strain>
    </source>
</reference>
<feature type="chain" id="PRO_0000375023" description="Ribosomal protein uS12 methylthiotransferase RimO">
    <location>
        <begin position="1"/>
        <end position="493"/>
    </location>
</feature>
<feature type="domain" description="MTTase N-terminal" evidence="1">
    <location>
        <begin position="5"/>
        <end position="121"/>
    </location>
</feature>
<feature type="domain" description="Radical SAM core" evidence="2">
    <location>
        <begin position="179"/>
        <end position="410"/>
    </location>
</feature>
<feature type="domain" description="TRAM" evidence="1">
    <location>
        <begin position="412"/>
        <end position="482"/>
    </location>
</feature>
<feature type="region of interest" description="Disordered" evidence="3">
    <location>
        <begin position="153"/>
        <end position="177"/>
    </location>
</feature>
<feature type="binding site" evidence="1">
    <location>
        <position position="14"/>
    </location>
    <ligand>
        <name>[4Fe-4S] cluster</name>
        <dbReference type="ChEBI" id="CHEBI:49883"/>
        <label>1</label>
    </ligand>
</feature>
<feature type="binding site" evidence="1">
    <location>
        <position position="50"/>
    </location>
    <ligand>
        <name>[4Fe-4S] cluster</name>
        <dbReference type="ChEBI" id="CHEBI:49883"/>
        <label>1</label>
    </ligand>
</feature>
<feature type="binding site" evidence="1">
    <location>
        <position position="84"/>
    </location>
    <ligand>
        <name>[4Fe-4S] cluster</name>
        <dbReference type="ChEBI" id="CHEBI:49883"/>
        <label>1</label>
    </ligand>
</feature>
<feature type="binding site" evidence="1">
    <location>
        <position position="193"/>
    </location>
    <ligand>
        <name>[4Fe-4S] cluster</name>
        <dbReference type="ChEBI" id="CHEBI:49883"/>
        <label>2</label>
        <note>4Fe-4S-S-AdoMet</note>
    </ligand>
</feature>
<feature type="binding site" evidence="1">
    <location>
        <position position="197"/>
    </location>
    <ligand>
        <name>[4Fe-4S] cluster</name>
        <dbReference type="ChEBI" id="CHEBI:49883"/>
        <label>2</label>
        <note>4Fe-4S-S-AdoMet</note>
    </ligand>
</feature>
<feature type="binding site" evidence="1">
    <location>
        <position position="200"/>
    </location>
    <ligand>
        <name>[4Fe-4S] cluster</name>
        <dbReference type="ChEBI" id="CHEBI:49883"/>
        <label>2</label>
        <note>4Fe-4S-S-AdoMet</note>
    </ligand>
</feature>
<comment type="function">
    <text evidence="1">Catalyzes the methylthiolation of an aspartic acid residue of ribosomal protein uS12.</text>
</comment>
<comment type="catalytic activity">
    <reaction evidence="1">
        <text>L-aspartate(89)-[ribosomal protein uS12]-hydrogen + (sulfur carrier)-SH + AH2 + 2 S-adenosyl-L-methionine = 3-methylsulfanyl-L-aspartate(89)-[ribosomal protein uS12]-hydrogen + (sulfur carrier)-H + 5'-deoxyadenosine + L-methionine + A + S-adenosyl-L-homocysteine + 2 H(+)</text>
        <dbReference type="Rhea" id="RHEA:37087"/>
        <dbReference type="Rhea" id="RHEA-COMP:10460"/>
        <dbReference type="Rhea" id="RHEA-COMP:10461"/>
        <dbReference type="Rhea" id="RHEA-COMP:14737"/>
        <dbReference type="Rhea" id="RHEA-COMP:14739"/>
        <dbReference type="ChEBI" id="CHEBI:13193"/>
        <dbReference type="ChEBI" id="CHEBI:15378"/>
        <dbReference type="ChEBI" id="CHEBI:17319"/>
        <dbReference type="ChEBI" id="CHEBI:17499"/>
        <dbReference type="ChEBI" id="CHEBI:29917"/>
        <dbReference type="ChEBI" id="CHEBI:29961"/>
        <dbReference type="ChEBI" id="CHEBI:57844"/>
        <dbReference type="ChEBI" id="CHEBI:57856"/>
        <dbReference type="ChEBI" id="CHEBI:59789"/>
        <dbReference type="ChEBI" id="CHEBI:64428"/>
        <dbReference type="ChEBI" id="CHEBI:73599"/>
        <dbReference type="EC" id="2.8.4.4"/>
    </reaction>
</comment>
<comment type="cofactor">
    <cofactor evidence="1">
        <name>[4Fe-4S] cluster</name>
        <dbReference type="ChEBI" id="CHEBI:49883"/>
    </cofactor>
    <text evidence="1">Binds 2 [4Fe-4S] clusters. One cluster is coordinated with 3 cysteines and an exchangeable S-adenosyl-L-methionine.</text>
</comment>
<comment type="subcellular location">
    <subcellularLocation>
        <location evidence="1">Cytoplasm</location>
    </subcellularLocation>
</comment>
<comment type="similarity">
    <text evidence="1">Belongs to the methylthiotransferase family. RimO subfamily.</text>
</comment>
<gene>
    <name evidence="1" type="primary">rimO</name>
    <name type="ordered locus">SCO5752</name>
    <name type="ORF">SC7C7.07</name>
</gene>
<accession>O86812</accession>
<keyword id="KW-0004">4Fe-4S</keyword>
<keyword id="KW-0963">Cytoplasm</keyword>
<keyword id="KW-0408">Iron</keyword>
<keyword id="KW-0411">Iron-sulfur</keyword>
<keyword id="KW-0479">Metal-binding</keyword>
<keyword id="KW-1185">Reference proteome</keyword>
<keyword id="KW-0949">S-adenosyl-L-methionine</keyword>
<keyword id="KW-0808">Transferase</keyword>
<sequence>MPESRTVALVTLGCARNEVDSEELAGRLEADGWKLVDDAEEADVAVVNTCGFVEAAKKDSVDALLEANDLKGHGRTQAVVAVGCMAERYGKELADALPEADGVLGFDDYADISDRLQTILNGGIHAAHTPRDRRKLLPISPAERQEAGAAVALPGHGPTDLPEGVAPASGPRAPLRRRLDGSPVASVKLASGCDRRCSFCAIPSFRGSFISRRPSDVLNETRWLAEQGVKEIMLVSENNTSYGKDLGDIRLLESLLPNLAEVDGIERVRVSYLQPAEMRPGLIDVLTSTEKVAPYFDLSFQHSAPNVLRAMRRFGDTDRFLELLDTIRSKAPEAGVRSNFIVGFPGESEADLAELERFLNHARLDAIGVFGYSDEEGTEAATYGDKLDEDVVAERLARVSRLAEELVSQRADERVGATVRVLVESVDPAGEGDGVRGRAEHQAPETDGQVLLTSGAGLSVGRMVDAKVVGTEGVDLVAEPLLGSPEWSEEAGR</sequence>
<name>RIMO_STRCO</name>
<proteinExistence type="inferred from homology"/>
<protein>
    <recommendedName>
        <fullName evidence="1">Ribosomal protein uS12 methylthiotransferase RimO</fullName>
        <shortName evidence="1">uS12 MTTase</shortName>
        <shortName evidence="1">uS12 methylthiotransferase</shortName>
        <ecNumber evidence="1">2.8.4.4</ecNumber>
    </recommendedName>
    <alternativeName>
        <fullName evidence="1">Ribosomal protein uS12 (aspartate-C(3))-methylthiotransferase</fullName>
    </alternativeName>
    <alternativeName>
        <fullName evidence="1">Ribosome maturation factor RimO</fullName>
    </alternativeName>
</protein>
<dbReference type="EC" id="2.8.4.4" evidence="1"/>
<dbReference type="EMBL" id="AL939125">
    <property type="protein sequence ID" value="CAA19853.1"/>
    <property type="molecule type" value="Genomic_DNA"/>
</dbReference>
<dbReference type="PIR" id="T35685">
    <property type="entry name" value="T35685"/>
</dbReference>
<dbReference type="RefSeq" id="NP_629877.1">
    <property type="nucleotide sequence ID" value="NC_003888.3"/>
</dbReference>
<dbReference type="RefSeq" id="WP_003973272.1">
    <property type="nucleotide sequence ID" value="NZ_VNID01000007.1"/>
</dbReference>
<dbReference type="SMR" id="O86812"/>
<dbReference type="STRING" id="100226.gene:17763412"/>
<dbReference type="PaxDb" id="100226-SCO5752"/>
<dbReference type="GeneID" id="91383302"/>
<dbReference type="KEGG" id="sco:SCO5752"/>
<dbReference type="PATRIC" id="fig|100226.15.peg.5841"/>
<dbReference type="eggNOG" id="COG0621">
    <property type="taxonomic scope" value="Bacteria"/>
</dbReference>
<dbReference type="HOGENOM" id="CLU_018697_0_1_11"/>
<dbReference type="InParanoid" id="O86812"/>
<dbReference type="OrthoDB" id="9805215at2"/>
<dbReference type="PhylomeDB" id="O86812"/>
<dbReference type="Proteomes" id="UP000001973">
    <property type="component" value="Chromosome"/>
</dbReference>
<dbReference type="GO" id="GO:0005829">
    <property type="term" value="C:cytosol"/>
    <property type="evidence" value="ECO:0000318"/>
    <property type="project" value="GO_Central"/>
</dbReference>
<dbReference type="GO" id="GO:0051539">
    <property type="term" value="F:4 iron, 4 sulfur cluster binding"/>
    <property type="evidence" value="ECO:0000318"/>
    <property type="project" value="GO_Central"/>
</dbReference>
<dbReference type="GO" id="GO:0035599">
    <property type="term" value="F:aspartic acid methylthiotransferase activity"/>
    <property type="evidence" value="ECO:0000318"/>
    <property type="project" value="GO_Central"/>
</dbReference>
<dbReference type="GO" id="GO:0046872">
    <property type="term" value="F:metal ion binding"/>
    <property type="evidence" value="ECO:0007669"/>
    <property type="project" value="UniProtKB-KW"/>
</dbReference>
<dbReference type="GO" id="GO:0103039">
    <property type="term" value="F:protein methylthiotransferase activity"/>
    <property type="evidence" value="ECO:0007669"/>
    <property type="project" value="UniProtKB-EC"/>
</dbReference>
<dbReference type="GO" id="GO:0006400">
    <property type="term" value="P:tRNA modification"/>
    <property type="evidence" value="ECO:0007669"/>
    <property type="project" value="InterPro"/>
</dbReference>
<dbReference type="CDD" id="cd01335">
    <property type="entry name" value="Radical_SAM"/>
    <property type="match status" value="1"/>
</dbReference>
<dbReference type="FunFam" id="3.40.50.12160:FF:000007">
    <property type="entry name" value="Ribosomal protein S12 methylthiotransferase RimO"/>
    <property type="match status" value="1"/>
</dbReference>
<dbReference type="FunFam" id="3.80.30.20:FF:000001">
    <property type="entry name" value="tRNA-2-methylthio-N(6)-dimethylallyladenosine synthase 2"/>
    <property type="match status" value="1"/>
</dbReference>
<dbReference type="Gene3D" id="3.40.50.12160">
    <property type="entry name" value="Methylthiotransferase, N-terminal domain"/>
    <property type="match status" value="1"/>
</dbReference>
<dbReference type="Gene3D" id="2.40.50.140">
    <property type="entry name" value="Nucleic acid-binding proteins"/>
    <property type="match status" value="1"/>
</dbReference>
<dbReference type="Gene3D" id="3.80.30.20">
    <property type="entry name" value="tm_1862 like domain"/>
    <property type="match status" value="1"/>
</dbReference>
<dbReference type="HAMAP" id="MF_01865">
    <property type="entry name" value="MTTase_RimO"/>
    <property type="match status" value="1"/>
</dbReference>
<dbReference type="InterPro" id="IPR006638">
    <property type="entry name" value="Elp3/MiaA/NifB-like_rSAM"/>
</dbReference>
<dbReference type="InterPro" id="IPR005839">
    <property type="entry name" value="Methylthiotransferase"/>
</dbReference>
<dbReference type="InterPro" id="IPR020612">
    <property type="entry name" value="Methylthiotransferase_CS"/>
</dbReference>
<dbReference type="InterPro" id="IPR013848">
    <property type="entry name" value="Methylthiotransferase_N"/>
</dbReference>
<dbReference type="InterPro" id="IPR038135">
    <property type="entry name" value="Methylthiotransferase_N_sf"/>
</dbReference>
<dbReference type="InterPro" id="IPR012340">
    <property type="entry name" value="NA-bd_OB-fold"/>
</dbReference>
<dbReference type="InterPro" id="IPR005840">
    <property type="entry name" value="Ribosomal_uS12_MeSTrfase_RimO"/>
</dbReference>
<dbReference type="InterPro" id="IPR007197">
    <property type="entry name" value="rSAM"/>
</dbReference>
<dbReference type="InterPro" id="IPR023404">
    <property type="entry name" value="rSAM_horseshoe"/>
</dbReference>
<dbReference type="InterPro" id="IPR002792">
    <property type="entry name" value="TRAM_dom"/>
</dbReference>
<dbReference type="NCBIfam" id="TIGR01125">
    <property type="entry name" value="30S ribosomal protein S12 methylthiotransferase RimO"/>
    <property type="match status" value="1"/>
</dbReference>
<dbReference type="NCBIfam" id="TIGR00089">
    <property type="entry name" value="MiaB/RimO family radical SAM methylthiotransferase"/>
    <property type="match status" value="1"/>
</dbReference>
<dbReference type="PANTHER" id="PTHR43837">
    <property type="entry name" value="RIBOSOMAL PROTEIN S12 METHYLTHIOTRANSFERASE RIMO"/>
    <property type="match status" value="1"/>
</dbReference>
<dbReference type="PANTHER" id="PTHR43837:SF1">
    <property type="entry name" value="RIBOSOMAL PROTEIN US12 METHYLTHIOTRANSFERASE RIMO"/>
    <property type="match status" value="1"/>
</dbReference>
<dbReference type="Pfam" id="PF04055">
    <property type="entry name" value="Radical_SAM"/>
    <property type="match status" value="1"/>
</dbReference>
<dbReference type="Pfam" id="PF18693">
    <property type="entry name" value="TRAM_2"/>
    <property type="match status" value="1"/>
</dbReference>
<dbReference type="Pfam" id="PF00919">
    <property type="entry name" value="UPF0004"/>
    <property type="match status" value="1"/>
</dbReference>
<dbReference type="SFLD" id="SFLDG01082">
    <property type="entry name" value="B12-binding_domain_containing"/>
    <property type="match status" value="1"/>
</dbReference>
<dbReference type="SFLD" id="SFLDG01061">
    <property type="entry name" value="methylthiotransferase"/>
    <property type="match status" value="1"/>
</dbReference>
<dbReference type="SFLD" id="SFLDF00274">
    <property type="entry name" value="ribosomal_protein_S12_methylth"/>
    <property type="match status" value="1"/>
</dbReference>
<dbReference type="SMART" id="SM00729">
    <property type="entry name" value="Elp3"/>
    <property type="match status" value="1"/>
</dbReference>
<dbReference type="SUPFAM" id="SSF102114">
    <property type="entry name" value="Radical SAM enzymes"/>
    <property type="match status" value="1"/>
</dbReference>
<dbReference type="PROSITE" id="PS51449">
    <property type="entry name" value="MTTASE_N"/>
    <property type="match status" value="1"/>
</dbReference>
<dbReference type="PROSITE" id="PS01278">
    <property type="entry name" value="MTTASE_RADICAL"/>
    <property type="match status" value="1"/>
</dbReference>
<dbReference type="PROSITE" id="PS51918">
    <property type="entry name" value="RADICAL_SAM"/>
    <property type="match status" value="1"/>
</dbReference>
<dbReference type="PROSITE" id="PS50926">
    <property type="entry name" value="TRAM"/>
    <property type="match status" value="1"/>
</dbReference>